<keyword id="KW-0963">Cytoplasm</keyword>
<keyword id="KW-0238">DNA-binding</keyword>
<proteinExistence type="inferred from homology"/>
<protein>
    <recommendedName>
        <fullName evidence="1">Nucleoid-associated protein YbaB</fullName>
    </recommendedName>
</protein>
<gene>
    <name evidence="1" type="primary">ybaB</name>
    <name type="ordered locus">SFV_0444</name>
</gene>
<comment type="function">
    <text evidence="1">Binds to DNA and alters its conformation. May be involved in regulation of gene expression, nucleoid organization and DNA protection.</text>
</comment>
<comment type="subunit">
    <text evidence="1">Homodimer.</text>
</comment>
<comment type="subcellular location">
    <subcellularLocation>
        <location evidence="1">Cytoplasm</location>
        <location evidence="1">Nucleoid</location>
    </subcellularLocation>
</comment>
<comment type="similarity">
    <text evidence="1">Belongs to the YbaB/EbfC family.</text>
</comment>
<dbReference type="EMBL" id="CP000266">
    <property type="protein sequence ID" value="ABF02713.1"/>
    <property type="molecule type" value="Genomic_DNA"/>
</dbReference>
<dbReference type="RefSeq" id="WP_000467098.1">
    <property type="nucleotide sequence ID" value="NC_008258.1"/>
</dbReference>
<dbReference type="SMR" id="Q0T7B3"/>
<dbReference type="KEGG" id="sfv:SFV_0444"/>
<dbReference type="HOGENOM" id="CLU_140930_0_0_6"/>
<dbReference type="Proteomes" id="UP000000659">
    <property type="component" value="Chromosome"/>
</dbReference>
<dbReference type="GO" id="GO:0043590">
    <property type="term" value="C:bacterial nucleoid"/>
    <property type="evidence" value="ECO:0007669"/>
    <property type="project" value="UniProtKB-UniRule"/>
</dbReference>
<dbReference type="GO" id="GO:0005829">
    <property type="term" value="C:cytosol"/>
    <property type="evidence" value="ECO:0007669"/>
    <property type="project" value="TreeGrafter"/>
</dbReference>
<dbReference type="GO" id="GO:0003677">
    <property type="term" value="F:DNA binding"/>
    <property type="evidence" value="ECO:0007669"/>
    <property type="project" value="UniProtKB-UniRule"/>
</dbReference>
<dbReference type="FunFam" id="3.30.1310.10:FF:000001">
    <property type="entry name" value="Nucleoid-associated protein YbaB"/>
    <property type="match status" value="1"/>
</dbReference>
<dbReference type="Gene3D" id="3.30.1310.10">
    <property type="entry name" value="Nucleoid-associated protein YbaB-like domain"/>
    <property type="match status" value="1"/>
</dbReference>
<dbReference type="HAMAP" id="MF_00274">
    <property type="entry name" value="DNA_YbaB_EbfC"/>
    <property type="match status" value="1"/>
</dbReference>
<dbReference type="InterPro" id="IPR036894">
    <property type="entry name" value="YbaB-like_sf"/>
</dbReference>
<dbReference type="InterPro" id="IPR004401">
    <property type="entry name" value="YbaB/EbfC"/>
</dbReference>
<dbReference type="NCBIfam" id="TIGR00103">
    <property type="entry name" value="DNA_YbaB_EbfC"/>
    <property type="match status" value="1"/>
</dbReference>
<dbReference type="PANTHER" id="PTHR33449">
    <property type="entry name" value="NUCLEOID-ASSOCIATED PROTEIN YBAB"/>
    <property type="match status" value="1"/>
</dbReference>
<dbReference type="PANTHER" id="PTHR33449:SF1">
    <property type="entry name" value="NUCLEOID-ASSOCIATED PROTEIN YBAB"/>
    <property type="match status" value="1"/>
</dbReference>
<dbReference type="Pfam" id="PF02575">
    <property type="entry name" value="YbaB_DNA_bd"/>
    <property type="match status" value="1"/>
</dbReference>
<dbReference type="PIRSF" id="PIRSF004555">
    <property type="entry name" value="UCP004555"/>
    <property type="match status" value="1"/>
</dbReference>
<dbReference type="SUPFAM" id="SSF82607">
    <property type="entry name" value="YbaB-like"/>
    <property type="match status" value="1"/>
</dbReference>
<feature type="chain" id="PRO_1000003827" description="Nucleoid-associated protein YbaB">
    <location>
        <begin position="1"/>
        <end position="109"/>
    </location>
</feature>
<accession>Q0T7B3</accession>
<sequence length="109" mass="12015">MFGKGGLGNLMKQAQQMQEKMQKMQEEIAQLEVTGESGAGLVKVTINGAHNCRRVEIDPSLLEDDKEMLEDLVAAAFNDAARRIEETQKEKMASVSSGMQLPPGFKMPF</sequence>
<reference key="1">
    <citation type="journal article" date="2006" name="BMC Genomics">
        <title>Complete genome sequence of Shigella flexneri 5b and comparison with Shigella flexneri 2a.</title>
        <authorList>
            <person name="Nie H."/>
            <person name="Yang F."/>
            <person name="Zhang X."/>
            <person name="Yang J."/>
            <person name="Chen L."/>
            <person name="Wang J."/>
            <person name="Xiong Z."/>
            <person name="Peng J."/>
            <person name="Sun L."/>
            <person name="Dong J."/>
            <person name="Xue Y."/>
            <person name="Xu X."/>
            <person name="Chen S."/>
            <person name="Yao Z."/>
            <person name="Shen Y."/>
            <person name="Jin Q."/>
        </authorList>
    </citation>
    <scope>NUCLEOTIDE SEQUENCE [LARGE SCALE GENOMIC DNA]</scope>
    <source>
        <strain>8401</strain>
    </source>
</reference>
<name>YBAB_SHIF8</name>
<organism>
    <name type="scientific">Shigella flexneri serotype 5b (strain 8401)</name>
    <dbReference type="NCBI Taxonomy" id="373384"/>
    <lineage>
        <taxon>Bacteria</taxon>
        <taxon>Pseudomonadati</taxon>
        <taxon>Pseudomonadota</taxon>
        <taxon>Gammaproteobacteria</taxon>
        <taxon>Enterobacterales</taxon>
        <taxon>Enterobacteriaceae</taxon>
        <taxon>Shigella</taxon>
    </lineage>
</organism>
<evidence type="ECO:0000255" key="1">
    <source>
        <dbReference type="HAMAP-Rule" id="MF_00274"/>
    </source>
</evidence>